<protein>
    <recommendedName>
        <fullName>Cycloartenol synthase</fullName>
        <shortName>KdCAS</shortName>
        <ecNumber>5.4.99.8</ecNumber>
    </recommendedName>
</protein>
<reference key="1">
    <citation type="journal article" date="2010" name="J. Biol. Chem.">
        <title>Cloning and characterization of oxidosqualene cyclases from Kalanchoe daigremontiana: enzymes catalyzing up to 10 rearrangement steps yielding friedelin and other triterpenoids.</title>
        <authorList>
            <person name="Wang Z."/>
            <person name="Yeats T."/>
            <person name="Han H."/>
            <person name="Jetter R."/>
        </authorList>
    </citation>
    <scope>NUCLEOTIDE SEQUENCE [MRNA]</scope>
    <scope>FUNCTION</scope>
    <scope>CATALYTIC ACTIVITY</scope>
    <scope>TISSUE SPECIFICITY</scope>
</reference>
<evidence type="ECO:0000250" key="1">
    <source>
        <dbReference type="UniProtKB" id="P48449"/>
    </source>
</evidence>
<evidence type="ECO:0000255" key="2"/>
<evidence type="ECO:0000269" key="3">
    <source>
    </source>
</evidence>
<evidence type="ECO:0000305" key="4"/>
<keyword id="KW-0413">Isomerase</keyword>
<keyword id="KW-0444">Lipid biosynthesis</keyword>
<keyword id="KW-0443">Lipid metabolism</keyword>
<keyword id="KW-0472">Membrane</keyword>
<keyword id="KW-0677">Repeat</keyword>
<keyword id="KW-0752">Steroid biosynthesis</keyword>
<keyword id="KW-0812">Transmembrane</keyword>
<keyword id="KW-1133">Transmembrane helix</keyword>
<feature type="chain" id="PRO_0000418479" description="Cycloartenol synthase">
    <location>
        <begin position="1"/>
        <end position="764"/>
    </location>
</feature>
<feature type="transmembrane region" description="Helical" evidence="2">
    <location>
        <begin position="609"/>
        <end position="629"/>
    </location>
</feature>
<feature type="repeat" description="PFTB 1">
    <location>
        <begin position="148"/>
        <end position="189"/>
    </location>
</feature>
<feature type="repeat" description="PFTB 2">
    <location>
        <begin position="513"/>
        <end position="558"/>
    </location>
</feature>
<feature type="repeat" description="PFTB 3">
    <location>
        <begin position="590"/>
        <end position="630"/>
    </location>
</feature>
<feature type="repeat" description="PFTB 4">
    <location>
        <begin position="639"/>
        <end position="680"/>
    </location>
</feature>
<feature type="repeat" description="PFTB 5">
    <location>
        <begin position="701"/>
        <end position="742"/>
    </location>
</feature>
<feature type="active site" description="Proton donor" evidence="1">
    <location>
        <position position="484"/>
    </location>
</feature>
<dbReference type="EC" id="5.4.99.8"/>
<dbReference type="EMBL" id="HM623872">
    <property type="protein sequence ID" value="ADK35127.1"/>
    <property type="molecule type" value="mRNA"/>
</dbReference>
<dbReference type="SMR" id="E2IUB0"/>
<dbReference type="GO" id="GO:0005811">
    <property type="term" value="C:lipid droplet"/>
    <property type="evidence" value="ECO:0007669"/>
    <property type="project" value="InterPro"/>
</dbReference>
<dbReference type="GO" id="GO:0016020">
    <property type="term" value="C:membrane"/>
    <property type="evidence" value="ECO:0007669"/>
    <property type="project" value="UniProtKB-SubCell"/>
</dbReference>
<dbReference type="GO" id="GO:0016871">
    <property type="term" value="F:cycloartenol synthase activity"/>
    <property type="evidence" value="ECO:0000314"/>
    <property type="project" value="UniProtKB"/>
</dbReference>
<dbReference type="GO" id="GO:0006694">
    <property type="term" value="P:steroid biosynthetic process"/>
    <property type="evidence" value="ECO:0000314"/>
    <property type="project" value="UniProtKB"/>
</dbReference>
<dbReference type="GO" id="GO:0016104">
    <property type="term" value="P:triterpenoid biosynthetic process"/>
    <property type="evidence" value="ECO:0007669"/>
    <property type="project" value="InterPro"/>
</dbReference>
<dbReference type="CDD" id="cd02892">
    <property type="entry name" value="SQCY_1"/>
    <property type="match status" value="1"/>
</dbReference>
<dbReference type="FunFam" id="1.50.10.20:FF:000002">
    <property type="entry name" value="Terpene cyclase/mutase family member"/>
    <property type="match status" value="1"/>
</dbReference>
<dbReference type="FunFam" id="1.50.10.20:FF:000022">
    <property type="entry name" value="Terpene cyclase/mutase family member"/>
    <property type="match status" value="1"/>
</dbReference>
<dbReference type="Gene3D" id="1.50.10.20">
    <property type="match status" value="2"/>
</dbReference>
<dbReference type="InterPro" id="IPR032696">
    <property type="entry name" value="SQ_cyclase_C"/>
</dbReference>
<dbReference type="InterPro" id="IPR032697">
    <property type="entry name" value="SQ_cyclase_N"/>
</dbReference>
<dbReference type="InterPro" id="IPR018333">
    <property type="entry name" value="Squalene_cyclase"/>
</dbReference>
<dbReference type="InterPro" id="IPR002365">
    <property type="entry name" value="Terpene_synthase_CS"/>
</dbReference>
<dbReference type="InterPro" id="IPR008930">
    <property type="entry name" value="Terpenoid_cyclase/PrenylTrfase"/>
</dbReference>
<dbReference type="NCBIfam" id="TIGR01787">
    <property type="entry name" value="squalene_cyclas"/>
    <property type="match status" value="1"/>
</dbReference>
<dbReference type="PANTHER" id="PTHR11764:SF20">
    <property type="entry name" value="LANOSTEROL SYNTHASE"/>
    <property type="match status" value="1"/>
</dbReference>
<dbReference type="PANTHER" id="PTHR11764">
    <property type="entry name" value="TERPENE CYCLASE/MUTASE FAMILY MEMBER"/>
    <property type="match status" value="1"/>
</dbReference>
<dbReference type="Pfam" id="PF13243">
    <property type="entry name" value="SQHop_cyclase_C"/>
    <property type="match status" value="1"/>
</dbReference>
<dbReference type="Pfam" id="PF13249">
    <property type="entry name" value="SQHop_cyclase_N"/>
    <property type="match status" value="1"/>
</dbReference>
<dbReference type="SFLD" id="SFLDG01016">
    <property type="entry name" value="Prenyltransferase_Like_2"/>
    <property type="match status" value="1"/>
</dbReference>
<dbReference type="SUPFAM" id="SSF48239">
    <property type="entry name" value="Terpenoid cyclases/Protein prenyltransferases"/>
    <property type="match status" value="2"/>
</dbReference>
<dbReference type="PROSITE" id="PS01074">
    <property type="entry name" value="TERPENE_SYNTHASES"/>
    <property type="match status" value="1"/>
</dbReference>
<name>CASS_KALDA</name>
<organism>
    <name type="scientific">Kalanchoe daigremontiana</name>
    <name type="common">Devil's backbone</name>
    <name type="synonym">Bryophyllum daigremontianum</name>
    <dbReference type="NCBI Taxonomy" id="23013"/>
    <lineage>
        <taxon>Eukaryota</taxon>
        <taxon>Viridiplantae</taxon>
        <taxon>Streptophyta</taxon>
        <taxon>Embryophyta</taxon>
        <taxon>Tracheophyta</taxon>
        <taxon>Spermatophyta</taxon>
        <taxon>Magnoliopsida</taxon>
        <taxon>eudicotyledons</taxon>
        <taxon>Gunneridae</taxon>
        <taxon>Pentapetalae</taxon>
        <taxon>Saxifragales</taxon>
        <taxon>Crassulaceae</taxon>
        <taxon>Kalanchoe</taxon>
    </lineage>
</organism>
<sequence>MWKLKIADAGGSQWLRSVNNHIGRQIWDFDPALGSPEELAQIEDARDNFARHRFDKKHSADLLMRFQLTKENPQSDLLPKVNIGKIEDITEDAVTNTLRRAINFHSTTQAHDGHWPGDYGGPLFLMPGLVITLSITGALNAVLSKEHKKEMCRYLYNHQNEDGGWGLHIEGPSTMFGSVLNYVTLRLLGEDVNGGDGEIERARKWILDHGGATAITSWGKMWLSVLGVFEWCGNNPLPPEMWLFPYYLPVHPGRMWCHCRMVYLPMSYLYGKRFVGPITPTVLSLRKELFTVPYHEIDWNEARSLCAKEDLYYPHPVVQDILWATLHKVVEPVLLNWPGKKLREKALCSAIEHIHYEDENTRYICIGPVNKVLNMLCCWVEDPNSEAFKLHIPRLYDYLWIAEDGMKMQGYNGSQLWDTAFSVQAIVATKLVEEFSSTISKAHEFMKNSQVLEDYPGDLSYWYRHISKGAWPFSTADHGWPISDCTAEGLKVVLKLSQFPAELVGAPLSAKLVYNAVNVILSLQNIDGGFATYELTRSYSWMELLNPAETFGDIVIDYPYVECTSAALQSLVLFKKLHPEHRKEEVELCIKKAAAFIEKIQESDGSWYGSWAVCFTYGTWFGVLGLVAAGRNYKNSPSIRKACDFLLSKQLASGGWGESYLSCQNKVYTNIPGGRSHVVNTGWAMLALIGAGQAERDPVPLHRAAKFLIESQLENGDFPQQEIMGVFNKNCMISYAAYRNIFPIWALGEYRCKVLNASRGQMKT</sequence>
<proteinExistence type="evidence at protein level"/>
<accession>E2IUB0</accession>
<comment type="function">
    <text evidence="3">Oxidosqualene cyclase which catalyzes the conversion of oxidosqualene to cycloartenol.</text>
</comment>
<comment type="catalytic activity">
    <reaction evidence="3">
        <text>(S)-2,3-epoxysqualene = cycloartenol</text>
        <dbReference type="Rhea" id="RHEA:21308"/>
        <dbReference type="ChEBI" id="CHEBI:15441"/>
        <dbReference type="ChEBI" id="CHEBI:17030"/>
        <dbReference type="EC" id="5.4.99.8"/>
    </reaction>
</comment>
<comment type="subcellular location">
    <subcellularLocation>
        <location evidence="4">Membrane</location>
        <topology evidence="4">Single-pass membrane protein</topology>
    </subcellularLocation>
</comment>
<comment type="tissue specificity">
    <text evidence="3">Expressed in all leaf tissues.</text>
</comment>
<comment type="similarity">
    <text evidence="4">Belongs to the terpene cyclase/mutase family.</text>
</comment>